<proteinExistence type="evidence at protein level"/>
<keyword id="KW-0002">3D-structure</keyword>
<keyword id="KW-0903">Direct protein sequencing</keyword>
<keyword id="KW-0520">NAD</keyword>
<keyword id="KW-0560">Oxidoreductase</keyword>
<keyword id="KW-0614">Plasmid</keyword>
<keyword id="KW-1185">Reference proteome</keyword>
<feature type="initiator methionine" description="Removed" evidence="7">
    <location>
        <position position="1"/>
    </location>
</feature>
<feature type="chain" id="PRO_0000054705" description="2-(R)-hydroxypropyl-CoM dehydrogenase">
    <location>
        <begin position="2"/>
        <end position="250"/>
    </location>
</feature>
<feature type="active site" description="Proton acceptor" evidence="12 13">
    <location>
        <position position="155"/>
    </location>
</feature>
<feature type="binding site" evidence="4 14">
    <location>
        <begin position="12"/>
        <end position="14"/>
    </location>
    <ligand>
        <name>NAD(+)</name>
        <dbReference type="ChEBI" id="CHEBI:57540"/>
    </ligand>
</feature>
<feature type="binding site" evidence="4 14">
    <location>
        <position position="33"/>
    </location>
    <ligand>
        <name>NAD(+)</name>
        <dbReference type="ChEBI" id="CHEBI:57540"/>
    </ligand>
</feature>
<feature type="binding site" evidence="4 14">
    <location>
        <begin position="60"/>
        <end position="61"/>
    </location>
    <ligand>
        <name>NAD(+)</name>
        <dbReference type="ChEBI" id="CHEBI:57540"/>
    </ligand>
</feature>
<feature type="binding site" evidence="4 14">
    <location>
        <position position="87"/>
    </location>
    <ligand>
        <name>NAD(+)</name>
        <dbReference type="ChEBI" id="CHEBI:57540"/>
    </ligand>
</feature>
<feature type="binding site" evidence="4 14">
    <location>
        <position position="152"/>
    </location>
    <ligand>
        <name>2-oxopropyl-coenzyme M</name>
        <dbReference type="ChEBI" id="CHEBI:57552"/>
    </ligand>
</feature>
<feature type="binding site" evidence="4 14">
    <location>
        <begin position="188"/>
        <end position="192"/>
    </location>
    <ligand>
        <name>NAD(+)</name>
        <dbReference type="ChEBI" id="CHEBI:57540"/>
    </ligand>
</feature>
<feature type="binding site" evidence="4 14">
    <location>
        <begin position="195"/>
        <end position="196"/>
    </location>
    <ligand>
        <name>2-oxopropyl-coenzyme M</name>
        <dbReference type="ChEBI" id="CHEBI:57552"/>
    </ligand>
</feature>
<feature type="site" description="Transition state stabilizer" evidence="12 13">
    <location>
        <position position="142"/>
    </location>
</feature>
<feature type="site" description="Lowers pKa of active site Tyr" evidence="12 13">
    <location>
        <position position="159"/>
    </location>
</feature>
<feature type="mutagenesis site" description="Retains weak activity. 120-fold decrease in kcat." evidence="2">
    <original>S</original>
    <variation>A</variation>
    <location>
        <position position="142"/>
    </location>
</feature>
<feature type="mutagenesis site" description="Loss of activity." evidence="2">
    <original>S</original>
    <variation>C</variation>
    <location>
        <position position="142"/>
    </location>
</feature>
<feature type="mutagenesis site" description="Almost loss of activity with the natural substrate 2-KPC, but does not affect activity with 2-butanone as substrate." evidence="3">
    <original>R</original>
    <variation>A</variation>
    <location>
        <position position="152"/>
    </location>
</feature>
<feature type="mutagenesis site" description="Loss of activity." evidence="2">
    <original>Y</original>
    <variation>E</variation>
    <variation>F</variation>
    <location>
        <position position="155"/>
    </location>
</feature>
<feature type="mutagenesis site" description="Loss of activity." evidence="2">
    <original>K</original>
    <variation>A</variation>
    <location>
        <position position="159"/>
    </location>
</feature>
<feature type="mutagenesis site" description="Loss of activity." evidence="3">
    <original>R</original>
    <variation>A</variation>
    <location>
        <position position="179"/>
    </location>
</feature>
<feature type="mutagenesis site" description="Almost loss of activity with the natural substrate 2-KPC, but does not affect activity with 2-butanone as substrate." evidence="3">
    <original>R</original>
    <variation>A</variation>
    <location>
        <position position="196"/>
    </location>
</feature>
<feature type="mutagenesis site" description="Slight decrease in catalytic efficiency." evidence="3">
    <original>R</original>
    <variation>A</variation>
    <location>
        <position position="203"/>
    </location>
</feature>
<feature type="mutagenesis site" description="Does not affect catalytic efficiency." evidence="3">
    <original>R</original>
    <variation>A</variation>
    <location>
        <position position="209"/>
    </location>
</feature>
<feature type="strand" evidence="15">
    <location>
        <begin position="4"/>
        <end position="8"/>
    </location>
</feature>
<feature type="turn" evidence="15">
    <location>
        <begin position="9"/>
        <end position="11"/>
    </location>
</feature>
<feature type="helix" evidence="15">
    <location>
        <begin position="13"/>
        <end position="24"/>
    </location>
</feature>
<feature type="strand" evidence="15">
    <location>
        <begin position="28"/>
        <end position="34"/>
    </location>
</feature>
<feature type="helix" evidence="15">
    <location>
        <begin position="36"/>
        <end position="46"/>
    </location>
</feature>
<feature type="turn" evidence="15">
    <location>
        <begin position="48"/>
        <end position="50"/>
    </location>
</feature>
<feature type="helix" evidence="15">
    <location>
        <begin position="51"/>
        <end position="53"/>
    </location>
</feature>
<feature type="strand" evidence="15">
    <location>
        <begin position="54"/>
        <end position="58"/>
    </location>
</feature>
<feature type="helix" evidence="15">
    <location>
        <begin position="64"/>
        <end position="78"/>
    </location>
</feature>
<feature type="strand" evidence="15">
    <location>
        <begin position="83"/>
        <end position="86"/>
    </location>
</feature>
<feature type="helix" evidence="15">
    <location>
        <begin position="99"/>
        <end position="101"/>
    </location>
</feature>
<feature type="helix" evidence="15">
    <location>
        <begin position="104"/>
        <end position="114"/>
    </location>
</feature>
<feature type="helix" evidence="15">
    <location>
        <begin position="116"/>
        <end position="132"/>
    </location>
</feature>
<feature type="strand" evidence="15">
    <location>
        <begin position="135"/>
        <end position="140"/>
    </location>
</feature>
<feature type="helix" evidence="15">
    <location>
        <begin position="143"/>
        <end position="145"/>
    </location>
</feature>
<feature type="helix" evidence="15">
    <location>
        <begin position="153"/>
        <end position="173"/>
    </location>
</feature>
<feature type="helix" evidence="15">
    <location>
        <begin position="174"/>
        <end position="176"/>
    </location>
</feature>
<feature type="strand" evidence="15">
    <location>
        <begin position="178"/>
        <end position="185"/>
    </location>
</feature>
<feature type="turn" evidence="15">
    <location>
        <begin position="191"/>
        <end position="193"/>
    </location>
</feature>
<feature type="helix" evidence="15">
    <location>
        <begin position="194"/>
        <end position="197"/>
    </location>
</feature>
<feature type="helix" evidence="15">
    <location>
        <begin position="200"/>
        <end position="207"/>
    </location>
</feature>
<feature type="helix" evidence="15">
    <location>
        <begin position="218"/>
        <end position="229"/>
    </location>
</feature>
<feature type="strand" evidence="15">
    <location>
        <begin position="240"/>
        <end position="244"/>
    </location>
</feature>
<feature type="helix" evidence="15">
    <location>
        <begin position="247"/>
        <end position="249"/>
    </location>
</feature>
<reference key="1">
    <citation type="journal article" date="1995" name="Microbiology">
        <title>Complementation of Xanthobacter Py2 mutants in epoxyalkane degradation; expression and nucleotide sequence of the complementing DNA fragment.</title>
        <authorList>
            <person name="Swaving J."/>
            <person name="Weijers C.A.G.M."/>
            <person name="van Ooyen A.J.J."/>
            <person name="de Bont J.A.M."/>
        </authorList>
    </citation>
    <scope>NUCLEOTIDE SEQUENCE [GENOMIC DNA]</scope>
    <source>
        <strain>ATCC BAA-1158 / Py2</strain>
    </source>
</reference>
<reference key="2">
    <citation type="submission" date="2007-07" db="EMBL/GenBank/DDBJ databases">
        <title>Complete sequence of plasmid pXAUT01 of Xanthobacter autotrophicus Py2.</title>
        <authorList>
            <consortium name="US DOE Joint Genome Institute"/>
            <person name="Copeland A."/>
            <person name="Lucas S."/>
            <person name="Lapidus A."/>
            <person name="Barry K."/>
            <person name="Glavina del Rio T."/>
            <person name="Hammon N."/>
            <person name="Israni S."/>
            <person name="Dalin E."/>
            <person name="Tice H."/>
            <person name="Pitluck S."/>
            <person name="Sims D."/>
            <person name="Brettin T."/>
            <person name="Bruce D."/>
            <person name="Detter J.C."/>
            <person name="Han C."/>
            <person name="Tapia R."/>
            <person name="Brainard J."/>
            <person name="Schmutz J."/>
            <person name="Larimer F."/>
            <person name="Land M."/>
            <person name="Hauser L."/>
            <person name="Kyrpides N."/>
            <person name="Kim E."/>
            <person name="Ensigns S.A."/>
            <person name="Richardson P."/>
        </authorList>
    </citation>
    <scope>NUCLEOTIDE SEQUENCE [LARGE SCALE GENOMIC DNA]</scope>
    <source>
        <strain>ATCC BAA-1158 / Py2</strain>
    </source>
</reference>
<reference key="3">
    <citation type="journal article" date="1997" name="J. Biol. Chem.">
        <title>Purification to homogeneity and reconstitution of the individual components of the epoxide carboxylase multiprotein enzyme complex from Xanthobacter strain Py2.</title>
        <authorList>
            <person name="Allen J.R."/>
            <person name="Ensign S.A."/>
        </authorList>
    </citation>
    <scope>PROTEIN SEQUENCE OF 2-11</scope>
    <scope>FUNCTION</scope>
    <scope>PATHWAY</scope>
    <scope>SUBUNIT</scope>
    <source>
        <strain>ATCC BAA-1158 / Py2</strain>
    </source>
</reference>
<reference key="4">
    <citation type="journal article" date="1999" name="Proc. Natl. Acad. Sci. U.S.A.">
        <title>A role for coenzyme M (2-mercaptoethanesulfonic acid) in a bacterial pathway of aliphatic epoxide carboxylation.</title>
        <authorList>
            <person name="Allen J.R."/>
            <person name="Clark D.D."/>
            <person name="Krum J.G."/>
            <person name="Ensign S.A."/>
        </authorList>
    </citation>
    <scope>FUNCTION</scope>
    <scope>CATALYTIC ACTIVITY</scope>
    <scope>PATHWAY</scope>
    <scope>SUBUNIT</scope>
    <source>
        <strain>ATCC BAA-1158 / Py2</strain>
    </source>
</reference>
<reference key="5">
    <citation type="journal article" date="2002" name="Biochemistry">
        <title>Characterization of the 2-[(R)-2-hydroxypropylthio]ethanesulfonate dehydrogenase from Xanthobacter strain Py2: product inhibition, pH dependence of kinetic parameters, site-directed mutagenesis, rapid equilibrium inhibition, and chemical modification.</title>
        <authorList>
            <person name="Clark D.D."/>
            <person name="Ensign S.A."/>
        </authorList>
    </citation>
    <scope>FUNCTION</scope>
    <scope>CATALYTIC ACTIVITY</scope>
    <scope>ACTIVITY REGULATION</scope>
    <scope>BIOPHYSICOCHEMICAL PROPERTIES</scope>
    <scope>SUBUNIT</scope>
    <scope>MUTAGENESIS OF SER-142; TYR-155 AND LYS-159</scope>
    <scope>ACTIVE SITES</scope>
    <source>
        <strain>ATCC BAA-1158 / Py2</strain>
    </source>
</reference>
<reference key="6">
    <citation type="journal article" date="2004" name="Biochemistry">
        <title>The stereoselectivity and catalytic properties of Xanthobacter autotrophicus 2-[(R)-2-Hydroxypropylthio]ethanesulfonate dehydrogenase are controlled by interactions between C-terminal arginine residues and the sulfonate of coenzyme M.</title>
        <authorList>
            <person name="Clark D.D."/>
            <person name="Boyd J.M."/>
            <person name="Ensign S.A."/>
        </authorList>
    </citation>
    <scope>FUNCTION</scope>
    <scope>CATALYTIC ACTIVITY</scope>
    <scope>BIOPHYSICOCHEMICAL PROPERTIES</scope>
    <scope>DOMAIN</scope>
    <scope>MUTAGENESIS OF ARG-152; ARG-179; ARG-196; ARG-203 AND ARG-209</scope>
    <source>
        <strain>ATCC BAA-1158 / Py2</strain>
    </source>
</reference>
<reference key="7">
    <citation type="journal article" date="2010" name="Biochemistry">
        <title>Molecular basis for enantioselectivity in the (R)- and (S)-hydroxypropylthioethanesulfonate dehydrogenases, a unique pair of stereoselective short-chain dehydrogenases/reductases involved in aliphatic epoxide carboxylation.</title>
        <authorList>
            <person name="Sliwa D.A."/>
            <person name="Krishnakumar A.M."/>
            <person name="Peters J.W."/>
            <person name="Ensign S.A."/>
        </authorList>
    </citation>
    <scope>FUNCTION</scope>
    <scope>CATALYTIC ACTIVITY</scope>
    <scope>ACTIVITY REGULATION</scope>
    <scope>BIOPHYSICOCHEMICAL PROPERTIES</scope>
    <source>
        <strain>ATCC BAA-1158 / Py2</strain>
    </source>
</reference>
<reference key="8">
    <citation type="journal article" date="2010" name="J. Biol. Chem.">
        <title>Mechanism of inhibition of aliphatic epoxide carboxylation by the coenzyme M analog 2-bromoethanesulfonate.</title>
        <authorList>
            <person name="Boyd J.M."/>
            <person name="Clark D.D."/>
            <person name="Kofoed M.A."/>
            <person name="Ensign S.A."/>
        </authorList>
    </citation>
    <scope>ACTIVITY REGULATION</scope>
    <source>
        <strain>ATCC BAA-1158 / Py2</strain>
    </source>
</reference>
<reference key="9">
    <citation type="journal article" date="2003" name="Annu. Rev. Biochem.">
        <title>Aliphatic epoxide carboxylation.</title>
        <authorList>
            <person name="Ensign S.A."/>
            <person name="Allen J.R."/>
        </authorList>
    </citation>
    <scope>REVIEW</scope>
</reference>
<reference evidence="14" key="10">
    <citation type="journal article" date="2006" name="Biochemistry">
        <title>Structural basis for stereoselectivity in the (R)- and (S)-hydroxypropylthioethanesulfonate dehydrogenases.</title>
        <authorList>
            <person name="Krishnakumar A.M."/>
            <person name="Nocek B.P."/>
            <person name="Clark D.D."/>
            <person name="Ensign S.A."/>
            <person name="Peters J.W."/>
        </authorList>
    </citation>
    <scope>X-RAY CRYSTALLOGRAPHY (1.80 ANGSTROMS) IN COMPLEX WITH 2-OXOPROPYL-COENZYME M AND NAD</scope>
    <scope>SUBUNIT</scope>
    <scope>DOMAIN</scope>
    <scope>ACTIVE SITES</scope>
    <source>
        <strain>ATCC BAA-1158 / Py2</strain>
    </source>
</reference>
<name>HCDR1_XANP2</name>
<sequence length="250" mass="26143">MSRVAIVTGASSGNGLAIATRFLARGDRVAALDLSAETLEETARTHWHAYADKVLRVRADVADEGDVNAAIAATMEQFGAIDVLVNNAGITGNSEAGVLHTTPVEQFDKVMAVNVRGIFLGCRAVLPHMLLQGAGVIVNIASVASLVAFPGRSAYTTSKGAVLQLTKSVAVDYAGSGIRCNAVCPGMIETPMTQWRLDQPELRDQVLARIPQKEIGTAAQVADAVMFLAGEDATYVNGAALVMDGAYTAI</sequence>
<gene>
    <name evidence="10" type="primary">xecD1</name>
    <name type="ordered locus">Xaut_4868</name>
</gene>
<protein>
    <recommendedName>
        <fullName evidence="8">2-(R)-hydroxypropyl-CoM dehydrogenase</fullName>
        <shortName evidence="9">R-HPCDH</shortName>
        <ecNumber evidence="1 2 3 5">1.1.1.268</ecNumber>
    </recommendedName>
    <alternativeName>
        <fullName evidence="9">2-[(R)-2-hydroxypropylthio]ethanesulfonate dehydrogenase</fullName>
    </alternativeName>
    <alternativeName>
        <fullName>Aliphatic epoxide carboxylation component III</fullName>
    </alternativeName>
    <alternativeName>
        <fullName evidence="11">Epoxide carboxylase component III</fullName>
    </alternativeName>
    <alternativeName>
        <fullName evidence="10">RHPCDH1</fullName>
    </alternativeName>
</protein>
<geneLocation type="plasmid">
    <name>pXAUT01</name>
</geneLocation>
<accession>Q56840</accession>
<accession>A7IPY3</accession>
<comment type="function">
    <text evidence="1 2 3 5 7">Involved in aliphatic epoxide carboxylation (PubMed:10411892, PubMed:11851420, PubMed:9405410). Catalyzes the reversible oxidation of (R)-2-hydroxypropyl-coenzyme M (R-HPC) to 2-oxopropyl-coenzyme M (2-KPC) (PubMed:10411892, PubMed:11851420, PubMed:15157110, PubMed:20302306). The enzyme is highly specific for the R enantiomers (PubMed:10411892, PubMed:15157110, PubMed:20302306). In vitro can also use achiral 2-propanol and short-chain (R)- and (S)-2-alkanols (PubMed:15157110).</text>
</comment>
<comment type="catalytic activity">
    <reaction evidence="1 2 3 5">
        <text>(R)-2-hydroxypropyl-coenzyme M + NAD(+) = 2-oxopropyl-coenzyme M + NADH + H(+)</text>
        <dbReference type="Rhea" id="RHEA:13249"/>
        <dbReference type="ChEBI" id="CHEBI:15378"/>
        <dbReference type="ChEBI" id="CHEBI:57540"/>
        <dbReference type="ChEBI" id="CHEBI:57552"/>
        <dbReference type="ChEBI" id="CHEBI:57945"/>
        <dbReference type="ChEBI" id="CHEBI:58458"/>
        <dbReference type="EC" id="1.1.1.268"/>
    </reaction>
    <physiologicalReaction direction="left-to-right" evidence="1 2 3 5">
        <dbReference type="Rhea" id="RHEA:13250"/>
    </physiologicalReaction>
</comment>
<comment type="activity regulation">
    <text evidence="2 5 6">Inhibited by the arginine-specific modifiers 2,3-butanedione and phenylglyoxal (PubMed:11851420). 2-(2-methyl-2-hydroxypropylthio)ethanesulfonate (M-HPC), an achiral analog of both R-HPC and S-HPC, and (2S)-2-hydroxypropyl-coenzyme M (S-HPC) are competitive inhibitors (PubMed:11851420, PubMed:20302306). Inhibited (at 70%) by the coenzyme M analog 2-bromoethanesulfonate (BES) (PubMed:20551308).</text>
</comment>
<comment type="biophysicochemical properties">
    <kinetics>
        <KM evidence="2">105 uM for R-HPC (at pH 7.5)</KM>
        <KM evidence="3">102 uM for R-HPC (at pH 7.5)</KM>
        <KM evidence="5">96 uM for R-HPC</KM>
        <KM evidence="3">100 uM for S-HPC (at pH 7.5)</KM>
        <KM evidence="5">220 uM for S-HPC</KM>
        <KM evidence="3">1726 mM for 2-propanol (at pH 7.5)</KM>
        <KM evidence="3">328 mM for (R)-2-butanol (at pH 7.5)</KM>
        <KM evidence="3">315 mM for (S)-2-butanol (at pH 7.5)</KM>
        <KM evidence="5">220 mM for (R)-2-butanol</KM>
        <KM evidence="5">350 mM for (S)-2-butanol</KM>
        <KM evidence="3">20 mM for (R)-2-pentanol (at pH 7.5)</KM>
        <KM evidence="3">153 mM for (S)-2-pentanol (at pH 7.5)</KM>
        <KM evidence="3">4.6 mM for (R)-2-hexanol (at pH 7.5)</KM>
        <KM evidence="3">2.64 mM for (R)-2-heptanol (at pH 7.5)</KM>
        <KM evidence="3">1.08 mM for (R)-2-octanol (at pH 7.5)</KM>
        <KM evidence="2">457 uM for NAD(+) (at pH 7.5)</KM>
        <KM evidence="2">92 uM for 2-KPC (at pH 7.5)</KM>
        <KM evidence="5">68 uM for 2-KPC</KM>
        <KM evidence="2">36.6 uM for NADH (at pH 7.5)</KM>
        <Vmax evidence="2">54.7 umol/min/mg enzyme for RHPC oxidation (at pH 7.5)</Vmax>
        <Vmax evidence="2">51.9 umol/min/mg enzyme for 2-KPC reduction (at pH 7.5)</Vmax>
        <text evidence="2 3 5">kcat is 25.8 sec(-1) for R-HPC oxidation (at pH 7.5). kcat is 24.5 sec(-1) for 2-KPC reduction (at pH 7.5) (PubMed:11851420). kcat is 26.8 sec(-1) with R-HPC as substrate. kcat is 0.044 sec(-1) with S-HPC as substrate. kcat is 2.9 sec(-1) with 2-propanol as substrate. kcat is 0.98 sec(-1) with (R)-2-butanol as substrate. kcat is 2.2 sec(-1) with (S)-2-butanol as substrate. kcat is 1.1 sec(-1) with (R)-2-pentanol as substrate. kcat is 2.9 sec(-1) with (S)-2-pentanol as substrate. kcat is 2.7 sec(-1) with (R)-2-hexanol as substrate. kcat is 1.8 sec(-1) with (R)-2-heptanol as substrate. kcat is 1.7 sec(-1) with (R)-2-octanol as substrate (PubMed:15157110). kcat is 48 sec(-1) with R-HPC as substrate. kcat is 0.12 sec(-1) with S-HPC as substrate. kcat is 29 sec(-1) with 2-KPC as substrate (PubMed:20302306).</text>
    </kinetics>
</comment>
<comment type="pathway">
    <text evidence="1 7">Alkene metabolism; propylene degradation.</text>
</comment>
<comment type="subunit">
    <text evidence="1 2 4 7">Homodimer in solution (PubMed:11851420, PubMed:9405410). Homotetramer (PubMed:16846226). Component III of the aliphatic epoxide carboxylation complex together with components I, II and IV (PubMed:10411892, PubMed:9405410).</text>
</comment>
<comment type="induction">
    <text>By aliphatic and chlorinated alkenes.</text>
</comment>
<comment type="domain">
    <text evidence="3 4">Interactions between the sulfonate of coenzyme M (CoM) and specific arginine residues are key to the enantioselectivity and catalytic efficiency of R-HPCDH (PubMed:15157110, PubMed:16846226). The structure is stabilized by the interaction of the terminal carboxylates of each subunit with divalent metal ions (PubMed:16846226).</text>
</comment>
<comment type="miscellaneous">
    <text evidence="5">Enantioselectivity is dictated largely by differences in kcat.</text>
</comment>
<comment type="similarity">
    <text evidence="12">Belongs to the short-chain dehydrogenases/reductases (SDR) family.</text>
</comment>
<evidence type="ECO:0000269" key="1">
    <source>
    </source>
</evidence>
<evidence type="ECO:0000269" key="2">
    <source>
    </source>
</evidence>
<evidence type="ECO:0000269" key="3">
    <source>
    </source>
</evidence>
<evidence type="ECO:0000269" key="4">
    <source>
    </source>
</evidence>
<evidence type="ECO:0000269" key="5">
    <source>
    </source>
</evidence>
<evidence type="ECO:0000269" key="6">
    <source>
    </source>
</evidence>
<evidence type="ECO:0000269" key="7">
    <source>
    </source>
</evidence>
<evidence type="ECO:0000303" key="8">
    <source>
    </source>
</evidence>
<evidence type="ECO:0000303" key="9">
    <source>
    </source>
</evidence>
<evidence type="ECO:0000303" key="10">
    <source>
    </source>
</evidence>
<evidence type="ECO:0000303" key="11">
    <source>
    </source>
</evidence>
<evidence type="ECO:0000305" key="12">
    <source>
    </source>
</evidence>
<evidence type="ECO:0000305" key="13">
    <source>
    </source>
</evidence>
<evidence type="ECO:0007744" key="14">
    <source>
        <dbReference type="PDB" id="2CFC"/>
    </source>
</evidence>
<evidence type="ECO:0007829" key="15">
    <source>
        <dbReference type="PDB" id="2CFC"/>
    </source>
</evidence>
<organism>
    <name type="scientific">Xanthobacter autotrophicus (strain ATCC BAA-1158 / Py2)</name>
    <dbReference type="NCBI Taxonomy" id="78245"/>
    <lineage>
        <taxon>Bacteria</taxon>
        <taxon>Pseudomonadati</taxon>
        <taxon>Pseudomonadota</taxon>
        <taxon>Alphaproteobacteria</taxon>
        <taxon>Hyphomicrobiales</taxon>
        <taxon>Xanthobacteraceae</taxon>
        <taxon>Xanthobacter</taxon>
    </lineage>
</organism>
<dbReference type="EC" id="1.1.1.268" evidence="1 2 3 5"/>
<dbReference type="EMBL" id="X79863">
    <property type="protein sequence ID" value="CAA56244.1"/>
    <property type="molecule type" value="Genomic_DNA"/>
</dbReference>
<dbReference type="EMBL" id="CP000782">
    <property type="protein sequence ID" value="ABS70079.1"/>
    <property type="molecule type" value="Genomic_DNA"/>
</dbReference>
<dbReference type="PIR" id="S47054">
    <property type="entry name" value="S47054"/>
</dbReference>
<dbReference type="PDB" id="2CFC">
    <property type="method" value="X-ray"/>
    <property type="resolution" value="1.80 A"/>
    <property type="chains" value="A/B/C/D=2-250"/>
</dbReference>
<dbReference type="PDBsum" id="2CFC"/>
<dbReference type="SMR" id="Q56840"/>
<dbReference type="KEGG" id="xau:Xaut_4868"/>
<dbReference type="eggNOG" id="COG1028">
    <property type="taxonomic scope" value="Bacteria"/>
</dbReference>
<dbReference type="HOGENOM" id="CLU_010194_1_0_5"/>
<dbReference type="OrthoDB" id="5457012at2"/>
<dbReference type="PhylomeDB" id="Q56840"/>
<dbReference type="BioCyc" id="MetaCyc:MONOMER-13285"/>
<dbReference type="BRENDA" id="1.1.1.268">
    <property type="organism ID" value="1641"/>
</dbReference>
<dbReference type="UniPathway" id="UPA00776"/>
<dbReference type="EvolutionaryTrace" id="Q56840"/>
<dbReference type="Proteomes" id="UP000002417">
    <property type="component" value="Plasmid pXAUT01"/>
</dbReference>
<dbReference type="GO" id="GO:0050574">
    <property type="term" value="F:2-(R)-hydroxypropyl-CoM dehydrogenase activity"/>
    <property type="evidence" value="ECO:0007669"/>
    <property type="project" value="UniProtKB-EC"/>
</dbReference>
<dbReference type="GO" id="GO:0042208">
    <property type="term" value="P:propylene catabolic process"/>
    <property type="evidence" value="ECO:0007669"/>
    <property type="project" value="UniProtKB-UniPathway"/>
</dbReference>
<dbReference type="CDD" id="cd05233">
    <property type="entry name" value="SDR_c"/>
    <property type="match status" value="1"/>
</dbReference>
<dbReference type="FunFam" id="3.40.50.720:FF:000084">
    <property type="entry name" value="Short-chain dehydrogenase reductase"/>
    <property type="match status" value="1"/>
</dbReference>
<dbReference type="Gene3D" id="3.40.50.720">
    <property type="entry name" value="NAD(P)-binding Rossmann-like Domain"/>
    <property type="match status" value="1"/>
</dbReference>
<dbReference type="InterPro" id="IPR036291">
    <property type="entry name" value="NAD(P)-bd_dom_sf"/>
</dbReference>
<dbReference type="InterPro" id="IPR020904">
    <property type="entry name" value="Sc_DH/Rdtase_CS"/>
</dbReference>
<dbReference type="InterPro" id="IPR002347">
    <property type="entry name" value="SDR_fam"/>
</dbReference>
<dbReference type="InterPro" id="IPR051122">
    <property type="entry name" value="SDR_superfamily_enzyme"/>
</dbReference>
<dbReference type="NCBIfam" id="NF005559">
    <property type="entry name" value="PRK07231.1"/>
    <property type="match status" value="1"/>
</dbReference>
<dbReference type="PANTHER" id="PTHR43477">
    <property type="entry name" value="DIHYDROANTICAPSIN 7-DEHYDROGENASE"/>
    <property type="match status" value="1"/>
</dbReference>
<dbReference type="PANTHER" id="PTHR43477:SF1">
    <property type="entry name" value="DIHYDROANTICAPSIN 7-DEHYDROGENASE"/>
    <property type="match status" value="1"/>
</dbReference>
<dbReference type="Pfam" id="PF13561">
    <property type="entry name" value="adh_short_C2"/>
    <property type="match status" value="1"/>
</dbReference>
<dbReference type="PRINTS" id="PR00081">
    <property type="entry name" value="GDHRDH"/>
</dbReference>
<dbReference type="PRINTS" id="PR00080">
    <property type="entry name" value="SDRFAMILY"/>
</dbReference>
<dbReference type="SUPFAM" id="SSF51735">
    <property type="entry name" value="NAD(P)-binding Rossmann-fold domains"/>
    <property type="match status" value="1"/>
</dbReference>
<dbReference type="PROSITE" id="PS00061">
    <property type="entry name" value="ADH_SHORT"/>
    <property type="match status" value="1"/>
</dbReference>